<proteinExistence type="inferred from homology"/>
<evidence type="ECO:0000255" key="1">
    <source>
        <dbReference type="HAMAP-Rule" id="MF_00791"/>
    </source>
</evidence>
<accession>B2K486</accession>
<sequence>MIEQPRICVQVQSIYVETQSIPEEERFVFAYTVTVRNLGRSNVQLLGRYWLITNSNGRQTEVQGEGVIGEQPLILPGNEFQYTSGAVLETPLGTMEGHYEMIDHLGQAFRTVIPVFRLAIPALIH</sequence>
<name>APAG_YERPB</name>
<organism>
    <name type="scientific">Yersinia pseudotuberculosis serotype IB (strain PB1/+)</name>
    <dbReference type="NCBI Taxonomy" id="502801"/>
    <lineage>
        <taxon>Bacteria</taxon>
        <taxon>Pseudomonadati</taxon>
        <taxon>Pseudomonadota</taxon>
        <taxon>Gammaproteobacteria</taxon>
        <taxon>Enterobacterales</taxon>
        <taxon>Yersiniaceae</taxon>
        <taxon>Yersinia</taxon>
    </lineage>
</organism>
<feature type="chain" id="PRO_1000133824" description="Protein ApaG">
    <location>
        <begin position="1"/>
        <end position="125"/>
    </location>
</feature>
<feature type="domain" description="ApaG" evidence="1">
    <location>
        <begin position="1"/>
        <end position="125"/>
    </location>
</feature>
<protein>
    <recommendedName>
        <fullName evidence="1">Protein ApaG</fullName>
    </recommendedName>
</protein>
<gene>
    <name evidence="1" type="primary">apaG</name>
    <name type="ordered locus">YPTS_0655</name>
</gene>
<dbReference type="EMBL" id="CP001048">
    <property type="protein sequence ID" value="ACC87639.1"/>
    <property type="molecule type" value="Genomic_DNA"/>
</dbReference>
<dbReference type="RefSeq" id="WP_011191709.1">
    <property type="nucleotide sequence ID" value="NZ_CP009780.1"/>
</dbReference>
<dbReference type="SMR" id="B2K486"/>
<dbReference type="GeneID" id="49787365"/>
<dbReference type="KEGG" id="ypb:YPTS_0655"/>
<dbReference type="PATRIC" id="fig|502801.10.peg.4340"/>
<dbReference type="GO" id="GO:0070987">
    <property type="term" value="P:error-free translesion synthesis"/>
    <property type="evidence" value="ECO:0007669"/>
    <property type="project" value="TreeGrafter"/>
</dbReference>
<dbReference type="Gene3D" id="2.60.40.1470">
    <property type="entry name" value="ApaG domain"/>
    <property type="match status" value="1"/>
</dbReference>
<dbReference type="HAMAP" id="MF_00791">
    <property type="entry name" value="ApaG"/>
    <property type="match status" value="1"/>
</dbReference>
<dbReference type="InterPro" id="IPR007474">
    <property type="entry name" value="ApaG_domain"/>
</dbReference>
<dbReference type="InterPro" id="IPR036767">
    <property type="entry name" value="ApaG_sf"/>
</dbReference>
<dbReference type="InterPro" id="IPR023065">
    <property type="entry name" value="Uncharacterised_ApaG"/>
</dbReference>
<dbReference type="NCBIfam" id="NF003967">
    <property type="entry name" value="PRK05461.1"/>
    <property type="match status" value="1"/>
</dbReference>
<dbReference type="PANTHER" id="PTHR14289">
    <property type="entry name" value="F-BOX ONLY PROTEIN 3"/>
    <property type="match status" value="1"/>
</dbReference>
<dbReference type="PANTHER" id="PTHR14289:SF16">
    <property type="entry name" value="POLYMERASE DELTA-INTERACTING PROTEIN 2"/>
    <property type="match status" value="1"/>
</dbReference>
<dbReference type="Pfam" id="PF04379">
    <property type="entry name" value="DUF525"/>
    <property type="match status" value="1"/>
</dbReference>
<dbReference type="SUPFAM" id="SSF110069">
    <property type="entry name" value="ApaG-like"/>
    <property type="match status" value="1"/>
</dbReference>
<dbReference type="PROSITE" id="PS51087">
    <property type="entry name" value="APAG"/>
    <property type="match status" value="1"/>
</dbReference>
<reference key="1">
    <citation type="submission" date="2008-04" db="EMBL/GenBank/DDBJ databases">
        <title>Complete sequence of Yersinia pseudotuberculosis PB1/+.</title>
        <authorList>
            <person name="Copeland A."/>
            <person name="Lucas S."/>
            <person name="Lapidus A."/>
            <person name="Glavina del Rio T."/>
            <person name="Dalin E."/>
            <person name="Tice H."/>
            <person name="Bruce D."/>
            <person name="Goodwin L."/>
            <person name="Pitluck S."/>
            <person name="Munk A.C."/>
            <person name="Brettin T."/>
            <person name="Detter J.C."/>
            <person name="Han C."/>
            <person name="Tapia R."/>
            <person name="Schmutz J."/>
            <person name="Larimer F."/>
            <person name="Land M."/>
            <person name="Hauser L."/>
            <person name="Challacombe J.F."/>
            <person name="Green L."/>
            <person name="Lindler L.E."/>
            <person name="Nikolich M.P."/>
            <person name="Richardson P."/>
        </authorList>
    </citation>
    <scope>NUCLEOTIDE SEQUENCE [LARGE SCALE GENOMIC DNA]</scope>
    <source>
        <strain>PB1/+</strain>
    </source>
</reference>